<keyword id="KW-0496">Mitochondrion</keyword>
<keyword id="KW-1185">Reference proteome</keyword>
<keyword id="KW-0809">Transit peptide</keyword>
<keyword id="KW-0810">Translation regulation</keyword>
<accession>P32493</accession>
<accession>D6VZN8</accession>
<accession>P32446</accession>
<protein>
    <recommendedName>
        <fullName>ATPase expression protein 1, mitochondrial</fullName>
    </recommendedName>
    <alternativeName>
        <fullName>Nuclear control of ATPase messenger RNA expression protein 1</fullName>
    </alternativeName>
</protein>
<gene>
    <name type="primary">AEP1</name>
    <name type="synonym">NCA1</name>
    <name type="ordered locus">YMR064W</name>
    <name type="ORF">YM9916.03</name>
</gene>
<evidence type="ECO:0000255" key="1"/>
<evidence type="ECO:0000269" key="2">
    <source>
    </source>
</evidence>
<evidence type="ECO:0000269" key="3">
    <source>
    </source>
</evidence>
<evidence type="ECO:0000269" key="4">
    <source>
    </source>
</evidence>
<evidence type="ECO:0000269" key="5">
    <source>
    </source>
</evidence>
<evidence type="ECO:0000305" key="6"/>
<feature type="transit peptide" description="Mitochondrion" evidence="1">
    <location>
        <begin position="1"/>
        <end position="19"/>
    </location>
</feature>
<feature type="chain" id="PRO_0000021791" description="ATPase expression protein 1, mitochondrial">
    <location>
        <begin position="20"/>
        <end position="518"/>
    </location>
</feature>
<feature type="sequence conflict" description="In Ref. 1; AAA02908 and 4; CAA78171." evidence="6" ref="1 4">
    <original>E</original>
    <variation>G</variation>
    <location>
        <position position="51"/>
    </location>
</feature>
<feature type="sequence conflict" description="In Ref. 1; AAA02908 and 4; CAA78171." evidence="6" ref="1 4">
    <original>K</original>
    <variation>R</variation>
    <location>
        <position position="113"/>
    </location>
</feature>
<feature type="sequence conflict" description="In Ref. 1; AAA02908 and 4; CAA78171." evidence="6" ref="1 4">
    <original>I</original>
    <variation>V</variation>
    <location>
        <position position="159"/>
    </location>
</feature>
<feature type="sequence conflict" description="In Ref. 1; AAA02908 and 4; CAA78171." evidence="6" ref="1 4">
    <original>N</original>
    <variation>D</variation>
    <location>
        <position position="197"/>
    </location>
</feature>
<feature type="sequence conflict" description="In Ref. 1; AAA02908 and 4; CAA78171." evidence="6" ref="1 4">
    <original>K</original>
    <variation>N</variation>
    <location>
        <position position="212"/>
    </location>
</feature>
<feature type="sequence conflict" description="In Ref. 1; AAA02908 and 4; CAA78171." evidence="6" ref="1 4">
    <original>Y</original>
    <variation>F</variation>
    <location>
        <position position="225"/>
    </location>
</feature>
<feature type="sequence conflict" description="In Ref. 1; AAA02908 and 4; CAA78171." evidence="6" ref="1 4">
    <original>N</original>
    <variation>H</variation>
    <location>
        <position position="240"/>
    </location>
</feature>
<feature type="sequence conflict" description="In Ref. 1; AAA02908 and 4; CAA78171." evidence="6" ref="1 4">
    <original>K</original>
    <variation>I</variation>
    <location>
        <position position="295"/>
    </location>
</feature>
<feature type="sequence conflict" description="In Ref. 1; AAA02908 and 4; CAA78171." evidence="6" ref="1 4">
    <original>R</original>
    <variation>Q</variation>
    <location>
        <position position="392"/>
    </location>
</feature>
<proteinExistence type="evidence at protein level"/>
<reference key="1">
    <citation type="journal article" date="1993" name="Curr. Genet.">
        <title>Characterization of a second nuclear gene, AEP1, required for expression of the mitochondrial OLI1 gene in Saccharomyces cerevisiae.</title>
        <authorList>
            <person name="Payne M.J."/>
            <person name="Lukins H.B."/>
        </authorList>
    </citation>
    <scope>NUCLEOTIDE SEQUENCE [GENOMIC DNA]</scope>
    <scope>FUNCTION</scope>
</reference>
<reference key="2">
    <citation type="journal article" date="1997" name="Nature">
        <title>The nucleotide sequence of Saccharomyces cerevisiae chromosome XIII.</title>
        <authorList>
            <person name="Bowman S."/>
            <person name="Churcher C.M."/>
            <person name="Badcock K."/>
            <person name="Brown D."/>
            <person name="Chillingworth T."/>
            <person name="Connor R."/>
            <person name="Dedman K."/>
            <person name="Devlin K."/>
            <person name="Gentles S."/>
            <person name="Hamlin N."/>
            <person name="Hunt S."/>
            <person name="Jagels K."/>
            <person name="Lye G."/>
            <person name="Moule S."/>
            <person name="Odell C."/>
            <person name="Pearson D."/>
            <person name="Rajandream M.A."/>
            <person name="Rice P."/>
            <person name="Skelton J."/>
            <person name="Walsh S.V."/>
            <person name="Whitehead S."/>
            <person name="Barrell B.G."/>
        </authorList>
    </citation>
    <scope>NUCLEOTIDE SEQUENCE [LARGE SCALE GENOMIC DNA]</scope>
    <source>
        <strain>ATCC 204508 / S288c</strain>
    </source>
</reference>
<reference key="3">
    <citation type="journal article" date="2014" name="G3 (Bethesda)">
        <title>The reference genome sequence of Saccharomyces cerevisiae: Then and now.</title>
        <authorList>
            <person name="Engel S.R."/>
            <person name="Dietrich F.S."/>
            <person name="Fisk D.G."/>
            <person name="Binkley G."/>
            <person name="Balakrishnan R."/>
            <person name="Costanzo M.C."/>
            <person name="Dwight S.S."/>
            <person name="Hitz B.C."/>
            <person name="Karra K."/>
            <person name="Nash R.S."/>
            <person name="Weng S."/>
            <person name="Wong E.D."/>
            <person name="Lloyd P."/>
            <person name="Skrzypek M.S."/>
            <person name="Miyasato S.R."/>
            <person name="Simison M."/>
            <person name="Cherry J.M."/>
        </authorList>
    </citation>
    <scope>GENOME REANNOTATION</scope>
    <source>
        <strain>ATCC 204508 / S288c</strain>
    </source>
</reference>
<reference key="4">
    <citation type="journal article" date="1993" name="J. Mol. Biol.">
        <title>Nuclear control of the messenger RNA expression for mitochondrial ATPase subunit 9 in a new yeast mutant.</title>
        <authorList>
            <person name="Ziaja K."/>
            <person name="Michaelis G."/>
            <person name="Lisowsky T."/>
        </authorList>
    </citation>
    <scope>NUCLEOTIDE SEQUENCE [GENOMIC DNA] OF 1-500</scope>
    <scope>FUNCTION</scope>
    <source>
        <strain>SC167</strain>
    </source>
</reference>
<reference key="5">
    <citation type="journal article" date="2003" name="Nature">
        <title>Global analysis of protein localization in budding yeast.</title>
        <authorList>
            <person name="Huh W.-K."/>
            <person name="Falvo J.V."/>
            <person name="Gerke L.C."/>
            <person name="Carroll A.S."/>
            <person name="Howson R.W."/>
            <person name="Weissman J.S."/>
            <person name="O'Shea E.K."/>
        </authorList>
    </citation>
    <scope>SUBCELLULAR LOCATION [LARGE SCALE ANALYSIS]</scope>
</reference>
<reference key="6">
    <citation type="journal article" date="2003" name="Nature">
        <title>Global analysis of protein expression in yeast.</title>
        <authorList>
            <person name="Ghaemmaghami S."/>
            <person name="Huh W.-K."/>
            <person name="Bower K."/>
            <person name="Howson R.W."/>
            <person name="Belle A."/>
            <person name="Dephoure N."/>
            <person name="O'Shea E.K."/>
            <person name="Weissman J.S."/>
        </authorList>
    </citation>
    <scope>LEVEL OF PROTEIN EXPRESSION [LARGE SCALE ANALYSIS]</scope>
</reference>
<organism>
    <name type="scientific">Saccharomyces cerevisiae (strain ATCC 204508 / S288c)</name>
    <name type="common">Baker's yeast</name>
    <dbReference type="NCBI Taxonomy" id="559292"/>
    <lineage>
        <taxon>Eukaryota</taxon>
        <taxon>Fungi</taxon>
        <taxon>Dikarya</taxon>
        <taxon>Ascomycota</taxon>
        <taxon>Saccharomycotina</taxon>
        <taxon>Saccharomycetes</taxon>
        <taxon>Saccharomycetales</taxon>
        <taxon>Saccharomycetaceae</taxon>
        <taxon>Saccharomyces</taxon>
    </lineage>
</organism>
<dbReference type="EMBL" id="M80615">
    <property type="protein sequence ID" value="AAA02908.1"/>
    <property type="molecule type" value="Genomic_DNA"/>
</dbReference>
<dbReference type="EMBL" id="X57087">
    <property type="protein sequence ID" value="CAA40367.1"/>
    <property type="molecule type" value="Genomic_DNA"/>
</dbReference>
<dbReference type="EMBL" id="Z48952">
    <property type="protein sequence ID" value="CAA88789.1"/>
    <property type="molecule type" value="Genomic_DNA"/>
</dbReference>
<dbReference type="EMBL" id="BK006946">
    <property type="protein sequence ID" value="DAA09962.1"/>
    <property type="molecule type" value="Genomic_DNA"/>
</dbReference>
<dbReference type="EMBL" id="Z12301">
    <property type="protein sequence ID" value="CAA78171.1"/>
    <property type="status" value="ALT_FRAME"/>
    <property type="molecule type" value="Genomic_DNA"/>
</dbReference>
<dbReference type="PIR" id="S52824">
    <property type="entry name" value="S52824"/>
</dbReference>
<dbReference type="RefSeq" id="NP_013780.1">
    <property type="nucleotide sequence ID" value="NM_001182562.1"/>
</dbReference>
<dbReference type="BioGRID" id="35239">
    <property type="interactions" value="79"/>
</dbReference>
<dbReference type="DIP" id="DIP-5193N"/>
<dbReference type="FunCoup" id="P32493">
    <property type="interactions" value="188"/>
</dbReference>
<dbReference type="IntAct" id="P32493">
    <property type="interactions" value="7"/>
</dbReference>
<dbReference type="MINT" id="P32493"/>
<dbReference type="STRING" id="4932.YMR064W"/>
<dbReference type="PaxDb" id="4932-YMR064W"/>
<dbReference type="PeptideAtlas" id="P32493"/>
<dbReference type="EnsemblFungi" id="YMR064W_mRNA">
    <property type="protein sequence ID" value="YMR064W"/>
    <property type="gene ID" value="YMR064W"/>
</dbReference>
<dbReference type="GeneID" id="855086"/>
<dbReference type="KEGG" id="sce:YMR064W"/>
<dbReference type="AGR" id="SGD:S000004668"/>
<dbReference type="SGD" id="S000004668">
    <property type="gene designation" value="AEP1"/>
</dbReference>
<dbReference type="VEuPathDB" id="FungiDB:YMR064W"/>
<dbReference type="eggNOG" id="ENOG502RXUX">
    <property type="taxonomic scope" value="Eukaryota"/>
</dbReference>
<dbReference type="HOGENOM" id="CLU_035453_0_0_1"/>
<dbReference type="InParanoid" id="P32493"/>
<dbReference type="OMA" id="CKVEANE"/>
<dbReference type="OrthoDB" id="4064791at2759"/>
<dbReference type="BioCyc" id="YEAST:G3O-32766-MONOMER"/>
<dbReference type="BioGRID-ORCS" id="855086">
    <property type="hits" value="1 hit in 10 CRISPR screens"/>
</dbReference>
<dbReference type="PRO" id="PR:P32493"/>
<dbReference type="Proteomes" id="UP000002311">
    <property type="component" value="Chromosome XIII"/>
</dbReference>
<dbReference type="RNAct" id="P32493">
    <property type="molecule type" value="protein"/>
</dbReference>
<dbReference type="GO" id="GO:0005739">
    <property type="term" value="C:mitochondrion"/>
    <property type="evidence" value="ECO:0007005"/>
    <property type="project" value="SGD"/>
</dbReference>
<dbReference type="GO" id="GO:0045182">
    <property type="term" value="F:translation regulator activity"/>
    <property type="evidence" value="ECO:0000315"/>
    <property type="project" value="SGD"/>
</dbReference>
<dbReference type="GO" id="GO:0006417">
    <property type="term" value="P:regulation of translation"/>
    <property type="evidence" value="ECO:0000315"/>
    <property type="project" value="SGD"/>
</dbReference>
<dbReference type="InterPro" id="IPR031467">
    <property type="entry name" value="Aep1"/>
</dbReference>
<dbReference type="Pfam" id="PF17049">
    <property type="entry name" value="AEP1"/>
    <property type="match status" value="1"/>
</dbReference>
<name>AEP1_YEAST</name>
<comment type="function">
    <text evidence="4 5">Required for translation of the mitochondrial OLI1 transcript encoding subunit 9 of mitochondrial ATP synthase.</text>
</comment>
<comment type="subcellular location">
    <subcellularLocation>
        <location evidence="2">Mitochondrion</location>
    </subcellularLocation>
</comment>
<comment type="miscellaneous">
    <text evidence="3">Present with 504 molecules/cell in log phase SD medium.</text>
</comment>
<comment type="similarity">
    <text evidence="6">Belongs to the AEP1 family.</text>
</comment>
<comment type="sequence caution" evidence="6">
    <conflict type="frameshift">
        <sequence resource="EMBL-CDS" id="CAA78171"/>
    </conflict>
</comment>
<sequence length="518" mass="59748">MITTVQEISKWRNLCFIRMQSRKWYPVLKKTPLVADGRKIIKHADKVPHPEEIIHPFYQPTAIEQFTACATEYNPSLLDGKKIAPSLIKHPVSLKTILVDSKLKFDDIRGVNKWLMEFVARRQHQRNIVLTPASKSVRSFHVLHLSSTDIAKLRGLENILSEIENTNDLQSRVESVNNELQNIFDRDSKQTRLFCENILAYLIKNYGNSTEKLILLINVTEMQLYSRLDQMKAMNIILYNILCKVEANENPPYSPTLVTALENLLAAINNRFFPGRCENSLHPIVIEQLLSYFIKTGNLNESKNFLGHLIKKGILPEATIINRYLEAIDVHFDKSTKIFDIRSKFAFIADLAPIIENYGTIDLFKFLIPMCRHFDELCSLLNIIRKSNNAKRAVDSTLPIFIKKVLTFTKDPMINSGNLSTVFNIVSPIYGQNVPSEFVEKFILSFALQGNYTMMAHMIDTYKIKLSHKYQLQIIRALKNSERNHALKNTGAVGYNKEFKKYFIEKYLNCTEREALRP</sequence>